<comment type="subunit">
    <text evidence="1">Part of the 50S ribosomal subunit.</text>
</comment>
<comment type="subcellular location">
    <subcellularLocation>
        <location>Plastid</location>
        <location>Chloroplast</location>
    </subcellularLocation>
</comment>
<comment type="similarity">
    <text evidence="4">Belongs to the universal ribosomal protein uL2 family.</text>
</comment>
<geneLocation type="chloroplast"/>
<protein>
    <recommendedName>
        <fullName evidence="2">Large ribosomal subunit protein uL2cz/uL2cy</fullName>
    </recommendedName>
    <alternativeName>
        <fullName evidence="4">50S ribosomal protein L2, chloroplastic</fullName>
    </alternativeName>
</protein>
<name>RK2_ORYNI</name>
<evidence type="ECO:0000250" key="1"/>
<evidence type="ECO:0000255" key="2">
    <source>
        <dbReference type="HAMAP-Rule" id="MF_01320"/>
    </source>
</evidence>
<evidence type="ECO:0000256" key="3">
    <source>
        <dbReference type="SAM" id="MobiDB-lite"/>
    </source>
</evidence>
<evidence type="ECO:0000305" key="4"/>
<evidence type="ECO:0000312" key="5">
    <source>
        <dbReference type="Proteomes" id="UP000006591"/>
    </source>
</evidence>
<organism>
    <name type="scientific">Oryza nivara</name>
    <name type="common">Indian wild rice</name>
    <name type="synonym">Oryza sativa f. spontanea</name>
    <dbReference type="NCBI Taxonomy" id="4536"/>
    <lineage>
        <taxon>Eukaryota</taxon>
        <taxon>Viridiplantae</taxon>
        <taxon>Streptophyta</taxon>
        <taxon>Embryophyta</taxon>
        <taxon>Tracheophyta</taxon>
        <taxon>Spermatophyta</taxon>
        <taxon>Magnoliopsida</taxon>
        <taxon>Liliopsida</taxon>
        <taxon>Poales</taxon>
        <taxon>Poaceae</taxon>
        <taxon>BOP clade</taxon>
        <taxon>Oryzoideae</taxon>
        <taxon>Oryzeae</taxon>
        <taxon>Oryzinae</taxon>
        <taxon>Oryza</taxon>
    </lineage>
</organism>
<sequence length="273" mass="29942">MAKHLYKTPIPSTRKGTIDRQVKSNPRNNLIHGRHRCGKGRNSRGIITARHRGGGHKRLYRKIDFRRNQKDISGRIVTIEYDPNRNAYICLIHYGDGEKGYILHPRGAIIGDTIVSGTKVPISMGNALPLTDMPLGTAIHNIEITRGRGGQLARAAGAVAKLIAKEGKSATLRLPSGEVRLVSQNCLATVGQVGNVGVNQKSLGRAGSKCWLGKRPVVRGVVMNPVDHPHGGGEGKAPIGRKKPTTPWGYPALGRRTRKRKKYSDSFILRRRK</sequence>
<gene>
    <name type="primary">rpl2-A</name>
</gene>
<gene>
    <name type="primary">rpl2-B</name>
</gene>
<dbReference type="EMBL" id="AP006728">
    <property type="protein sequence ID" value="BAD26869.1"/>
    <property type="molecule type" value="Genomic_DNA"/>
</dbReference>
<dbReference type="EMBL" id="AP006728">
    <property type="protein sequence ID" value="BAD26822.1"/>
    <property type="molecule type" value="Genomic_DNA"/>
</dbReference>
<dbReference type="SMR" id="Q6EN83"/>
<dbReference type="STRING" id="4536.Q6EN83"/>
<dbReference type="eggNOG" id="KOG0438">
    <property type="taxonomic scope" value="Eukaryota"/>
</dbReference>
<dbReference type="eggNOG" id="KOG0899">
    <property type="taxonomic scope" value="Eukaryota"/>
</dbReference>
<dbReference type="Proteomes" id="UP000006591">
    <property type="component" value="Chloroplast"/>
</dbReference>
<dbReference type="GO" id="GO:0009507">
    <property type="term" value="C:chloroplast"/>
    <property type="evidence" value="ECO:0007669"/>
    <property type="project" value="UniProtKB-SubCell"/>
</dbReference>
<dbReference type="GO" id="GO:0005762">
    <property type="term" value="C:mitochondrial large ribosomal subunit"/>
    <property type="evidence" value="ECO:0007669"/>
    <property type="project" value="TreeGrafter"/>
</dbReference>
<dbReference type="GO" id="GO:0009536">
    <property type="term" value="C:plastid"/>
    <property type="evidence" value="ECO:0000305"/>
    <property type="project" value="Gramene"/>
</dbReference>
<dbReference type="GO" id="GO:0019843">
    <property type="term" value="F:rRNA binding"/>
    <property type="evidence" value="ECO:0007669"/>
    <property type="project" value="UniProtKB-UniRule"/>
</dbReference>
<dbReference type="GO" id="GO:0003735">
    <property type="term" value="F:structural constituent of ribosome"/>
    <property type="evidence" value="ECO:0007669"/>
    <property type="project" value="InterPro"/>
</dbReference>
<dbReference type="GO" id="GO:0016740">
    <property type="term" value="F:transferase activity"/>
    <property type="evidence" value="ECO:0007669"/>
    <property type="project" value="InterPro"/>
</dbReference>
<dbReference type="GO" id="GO:0032543">
    <property type="term" value="P:mitochondrial translation"/>
    <property type="evidence" value="ECO:0007669"/>
    <property type="project" value="TreeGrafter"/>
</dbReference>
<dbReference type="FunFam" id="4.10.950.10:FF:000001">
    <property type="entry name" value="50S ribosomal protein L2"/>
    <property type="match status" value="1"/>
</dbReference>
<dbReference type="FunFam" id="2.30.30.30:FF:000008">
    <property type="entry name" value="50S ribosomal protein L2, chloroplastic"/>
    <property type="match status" value="1"/>
</dbReference>
<dbReference type="FunFam" id="2.40.50.140:FF:000029">
    <property type="entry name" value="50S ribosomal protein L2, chloroplastic"/>
    <property type="match status" value="1"/>
</dbReference>
<dbReference type="Gene3D" id="2.30.30.30">
    <property type="match status" value="1"/>
</dbReference>
<dbReference type="Gene3D" id="2.40.50.140">
    <property type="entry name" value="Nucleic acid-binding proteins"/>
    <property type="match status" value="1"/>
</dbReference>
<dbReference type="Gene3D" id="4.10.950.10">
    <property type="entry name" value="Ribosomal protein L2, domain 3"/>
    <property type="match status" value="1"/>
</dbReference>
<dbReference type="HAMAP" id="MF_01320_B">
    <property type="entry name" value="Ribosomal_uL2_B"/>
    <property type="match status" value="1"/>
</dbReference>
<dbReference type="InterPro" id="IPR012340">
    <property type="entry name" value="NA-bd_OB-fold"/>
</dbReference>
<dbReference type="InterPro" id="IPR014722">
    <property type="entry name" value="Rib_uL2_dom2"/>
</dbReference>
<dbReference type="InterPro" id="IPR002171">
    <property type="entry name" value="Ribosomal_uL2"/>
</dbReference>
<dbReference type="InterPro" id="IPR005880">
    <property type="entry name" value="Ribosomal_uL2_bac/org-type"/>
</dbReference>
<dbReference type="InterPro" id="IPR022669">
    <property type="entry name" value="Ribosomal_uL2_C"/>
</dbReference>
<dbReference type="InterPro" id="IPR022671">
    <property type="entry name" value="Ribosomal_uL2_CS"/>
</dbReference>
<dbReference type="InterPro" id="IPR014726">
    <property type="entry name" value="Ribosomal_uL2_dom3"/>
</dbReference>
<dbReference type="InterPro" id="IPR022666">
    <property type="entry name" value="Ribosomal_uL2_RNA-bd_dom"/>
</dbReference>
<dbReference type="InterPro" id="IPR008991">
    <property type="entry name" value="Translation_prot_SH3-like_sf"/>
</dbReference>
<dbReference type="NCBIfam" id="TIGR01171">
    <property type="entry name" value="rplB_bact"/>
    <property type="match status" value="1"/>
</dbReference>
<dbReference type="PANTHER" id="PTHR13691:SF57">
    <property type="entry name" value="LARGE RIBOSOMAL SUBUNIT PROTEIN UL2CZ_UL2CY"/>
    <property type="match status" value="1"/>
</dbReference>
<dbReference type="PANTHER" id="PTHR13691">
    <property type="entry name" value="RIBOSOMAL PROTEIN L2"/>
    <property type="match status" value="1"/>
</dbReference>
<dbReference type="Pfam" id="PF00181">
    <property type="entry name" value="Ribosomal_L2"/>
    <property type="match status" value="1"/>
</dbReference>
<dbReference type="Pfam" id="PF03947">
    <property type="entry name" value="Ribosomal_L2_C"/>
    <property type="match status" value="1"/>
</dbReference>
<dbReference type="PIRSF" id="PIRSF002158">
    <property type="entry name" value="Ribosomal_L2"/>
    <property type="match status" value="1"/>
</dbReference>
<dbReference type="SMART" id="SM01383">
    <property type="entry name" value="Ribosomal_L2"/>
    <property type="match status" value="1"/>
</dbReference>
<dbReference type="SMART" id="SM01382">
    <property type="entry name" value="Ribosomal_L2_C"/>
    <property type="match status" value="1"/>
</dbReference>
<dbReference type="SUPFAM" id="SSF50249">
    <property type="entry name" value="Nucleic acid-binding proteins"/>
    <property type="match status" value="1"/>
</dbReference>
<dbReference type="SUPFAM" id="SSF50104">
    <property type="entry name" value="Translation proteins SH3-like domain"/>
    <property type="match status" value="1"/>
</dbReference>
<dbReference type="PROSITE" id="PS00467">
    <property type="entry name" value="RIBOSOMAL_L2"/>
    <property type="match status" value="1"/>
</dbReference>
<keyword id="KW-0150">Chloroplast</keyword>
<keyword id="KW-0934">Plastid</keyword>
<keyword id="KW-1185">Reference proteome</keyword>
<keyword id="KW-0687">Ribonucleoprotein</keyword>
<keyword id="KW-0689">Ribosomal protein</keyword>
<proteinExistence type="inferred from homology"/>
<reference key="1">
    <citation type="journal article" date="2004" name="Gene">
        <title>The complete nucleotide sequence of wild rice (Oryza nivara) chloroplast genome: first genome wide comparative sequence analysis of wild and cultivated rice.</title>
        <authorList>
            <person name="Masood M.S."/>
            <person name="Nishikawa T."/>
            <person name="Fukuoka S."/>
            <person name="Njenga P.K."/>
            <person name="Tsudzuki T."/>
            <person name="Kadowaki K."/>
        </authorList>
    </citation>
    <scope>NUCLEOTIDE SEQUENCE [LARGE SCALE GENOMIC DNA]</scope>
    <source>
        <strain evidence="5">cv. SL10</strain>
    </source>
</reference>
<accession>Q6EN83</accession>
<feature type="chain" id="PRO_0000129689" description="Large ribosomal subunit protein uL2cz/uL2cy">
    <location>
        <begin position="1"/>
        <end position="273"/>
    </location>
</feature>
<feature type="region of interest" description="Disordered" evidence="3">
    <location>
        <begin position="1"/>
        <end position="20"/>
    </location>
</feature>
<feature type="region of interest" description="Disordered" evidence="3">
    <location>
        <begin position="225"/>
        <end position="273"/>
    </location>
</feature>